<comment type="function">
    <text evidence="3 4 5 6">Involved in the signal transduction pathway leading to the proteolytic activation of the mother cell transcription factor pro-sigma-K during sporulation. The signaling serine protease CtpB triggers pro-sigma-K processing by cleaving the pre-processed regulatory protein SpoIVFA and is necessary for the proper timing of sigma-K activation.</text>
</comment>
<comment type="catalytic activity">
    <reaction evidence="6">
        <text>The enzyme shows specific recognition of a C-terminal tripeptide, Xaa-Yaa-Zaa, in which Xaa is preferably Ala or Leu, Yaa is preferably Ala or Tyr, and Zaa is preferably Ala, but then cleaves at a variable distance from the C-terminus. A typical cleavage is -Ala-Ala-|-Arg-Ala-Ala-Lys-Glu-Asn-Tyr-Ala-Leu-Ala-Ala.</text>
        <dbReference type="EC" id="3.4.21.102"/>
    </reaction>
</comment>
<comment type="activity regulation">
    <text evidence="6">Activated by peptide binding to the PDZ domain.</text>
</comment>
<comment type="subunit">
    <text evidence="6">Homodimer.</text>
</comment>
<comment type="interaction">
    <interactant intactId="EBI-5246793">
        <id>O35002</id>
    </interactant>
    <interactant intactId="EBI-5246793">
        <id>O35002</id>
        <label>ctpB</label>
    </interactant>
    <organismsDiffer>false</organismsDiffer>
    <experiments>5</experiments>
</comment>
<comment type="interaction">
    <interactant intactId="EBI-5246793">
        <id>O35002</id>
    </interactant>
    <interactant intactId="EBI-5254757">
        <id>P26936</id>
        <label>spoIVFA</label>
    </interactant>
    <organismsDiffer>false</organismsDiffer>
    <experiments>2</experiments>
</comment>
<comment type="subcellular location">
    <subcellularLocation>
        <location evidence="5">Forespore intermembrane space</location>
    </subcellularLocation>
    <text>Is expressed in both the mother cell and forespore compartments but that synthesis in the forespore is both necessary and sufficient for the proper timing of pro-sigma-K processing.</text>
</comment>
<comment type="developmental stage">
    <text evidence="3 5">Is expressed in the forespore under the control of sigma-G, and in the mother cell under the control of sigma-E.</text>
</comment>
<comment type="domain">
    <text evidence="6">The PDZ domain functions as a gatekeeper to the protease tunnel and defines resting and active conformations of the protease.</text>
</comment>
<comment type="PTM">
    <text evidence="5 6">Is cleaved by SpoIVB in vitro and in vivo but this cleavage does not appear to be necessary for CtpB activation. CtpB can also cleave itself in vivo.</text>
</comment>
<comment type="disruption phenotype">
    <text evidence="3 4 6">Pro-sigma-K processing is delayed by approximately 30 minutes, and sporulation efficiency is reduced approximately two-fold.</text>
</comment>
<comment type="similarity">
    <text evidence="7">Belongs to the peptidase S41A family.</text>
</comment>
<reference key="1">
    <citation type="journal article" date="1998" name="Mol. Microbiol.">
        <title>A novel protein kinase that controls carbon catabolite repression in bacteria.</title>
        <authorList>
            <person name="Reizer J."/>
            <person name="Hoischen C."/>
            <person name="Titgemeyer F."/>
            <person name="Rivolta C."/>
            <person name="Rabus R."/>
            <person name="Stuelke J."/>
            <person name="Karamata D."/>
            <person name="Saier M.H. Jr."/>
            <person name="Hillen W."/>
        </authorList>
    </citation>
    <scope>NUCLEOTIDE SEQUENCE [GENOMIC DNA]</scope>
</reference>
<reference key="2">
    <citation type="submission" date="1997-11" db="EMBL/GenBank/DDBJ databases">
        <title>Nucleotide sequence of the 300-304 chromosomal segment of Bacillus subtilis.</title>
        <authorList>
            <person name="Lazarevic V."/>
            <person name="Soldo B."/>
            <person name="Rivolta C."/>
            <person name="Reynolds S."/>
            <person name="Mauel C."/>
            <person name="Karamata D."/>
        </authorList>
    </citation>
    <scope>NUCLEOTIDE SEQUENCE [GENOMIC DNA]</scope>
</reference>
<reference key="3">
    <citation type="journal article" date="1997" name="Nature">
        <title>The complete genome sequence of the Gram-positive bacterium Bacillus subtilis.</title>
        <authorList>
            <person name="Kunst F."/>
            <person name="Ogasawara N."/>
            <person name="Moszer I."/>
            <person name="Albertini A.M."/>
            <person name="Alloni G."/>
            <person name="Azevedo V."/>
            <person name="Bertero M.G."/>
            <person name="Bessieres P."/>
            <person name="Bolotin A."/>
            <person name="Borchert S."/>
            <person name="Borriss R."/>
            <person name="Boursier L."/>
            <person name="Brans A."/>
            <person name="Braun M."/>
            <person name="Brignell S.C."/>
            <person name="Bron S."/>
            <person name="Brouillet S."/>
            <person name="Bruschi C.V."/>
            <person name="Caldwell B."/>
            <person name="Capuano V."/>
            <person name="Carter N.M."/>
            <person name="Choi S.-K."/>
            <person name="Codani J.-J."/>
            <person name="Connerton I.F."/>
            <person name="Cummings N.J."/>
            <person name="Daniel R.A."/>
            <person name="Denizot F."/>
            <person name="Devine K.M."/>
            <person name="Duesterhoeft A."/>
            <person name="Ehrlich S.D."/>
            <person name="Emmerson P.T."/>
            <person name="Entian K.-D."/>
            <person name="Errington J."/>
            <person name="Fabret C."/>
            <person name="Ferrari E."/>
            <person name="Foulger D."/>
            <person name="Fritz C."/>
            <person name="Fujita M."/>
            <person name="Fujita Y."/>
            <person name="Fuma S."/>
            <person name="Galizzi A."/>
            <person name="Galleron N."/>
            <person name="Ghim S.-Y."/>
            <person name="Glaser P."/>
            <person name="Goffeau A."/>
            <person name="Golightly E.J."/>
            <person name="Grandi G."/>
            <person name="Guiseppi G."/>
            <person name="Guy B.J."/>
            <person name="Haga K."/>
            <person name="Haiech J."/>
            <person name="Harwood C.R."/>
            <person name="Henaut A."/>
            <person name="Hilbert H."/>
            <person name="Holsappel S."/>
            <person name="Hosono S."/>
            <person name="Hullo M.-F."/>
            <person name="Itaya M."/>
            <person name="Jones L.-M."/>
            <person name="Joris B."/>
            <person name="Karamata D."/>
            <person name="Kasahara Y."/>
            <person name="Klaerr-Blanchard M."/>
            <person name="Klein C."/>
            <person name="Kobayashi Y."/>
            <person name="Koetter P."/>
            <person name="Koningstein G."/>
            <person name="Krogh S."/>
            <person name="Kumano M."/>
            <person name="Kurita K."/>
            <person name="Lapidus A."/>
            <person name="Lardinois S."/>
            <person name="Lauber J."/>
            <person name="Lazarevic V."/>
            <person name="Lee S.-M."/>
            <person name="Levine A."/>
            <person name="Liu H."/>
            <person name="Masuda S."/>
            <person name="Mauel C."/>
            <person name="Medigue C."/>
            <person name="Medina N."/>
            <person name="Mellado R.P."/>
            <person name="Mizuno M."/>
            <person name="Moestl D."/>
            <person name="Nakai S."/>
            <person name="Noback M."/>
            <person name="Noone D."/>
            <person name="O'Reilly M."/>
            <person name="Ogawa K."/>
            <person name="Ogiwara A."/>
            <person name="Oudega B."/>
            <person name="Park S.-H."/>
            <person name="Parro V."/>
            <person name="Pohl T.M."/>
            <person name="Portetelle D."/>
            <person name="Porwollik S."/>
            <person name="Prescott A.M."/>
            <person name="Presecan E."/>
            <person name="Pujic P."/>
            <person name="Purnelle B."/>
            <person name="Rapoport G."/>
            <person name="Rey M."/>
            <person name="Reynolds S."/>
            <person name="Rieger M."/>
            <person name="Rivolta C."/>
            <person name="Rocha E."/>
            <person name="Roche B."/>
            <person name="Rose M."/>
            <person name="Sadaie Y."/>
            <person name="Sato T."/>
            <person name="Scanlan E."/>
            <person name="Schleich S."/>
            <person name="Schroeter R."/>
            <person name="Scoffone F."/>
            <person name="Sekiguchi J."/>
            <person name="Sekowska A."/>
            <person name="Seror S.J."/>
            <person name="Serror P."/>
            <person name="Shin B.-S."/>
            <person name="Soldo B."/>
            <person name="Sorokin A."/>
            <person name="Tacconi E."/>
            <person name="Takagi T."/>
            <person name="Takahashi H."/>
            <person name="Takemaru K."/>
            <person name="Takeuchi M."/>
            <person name="Tamakoshi A."/>
            <person name="Tanaka T."/>
            <person name="Terpstra P."/>
            <person name="Tognoni A."/>
            <person name="Tosato V."/>
            <person name="Uchiyama S."/>
            <person name="Vandenbol M."/>
            <person name="Vannier F."/>
            <person name="Vassarotti A."/>
            <person name="Viari A."/>
            <person name="Wambutt R."/>
            <person name="Wedler E."/>
            <person name="Wedler H."/>
            <person name="Weitzenegger T."/>
            <person name="Winters P."/>
            <person name="Wipat A."/>
            <person name="Yamamoto H."/>
            <person name="Yamane K."/>
            <person name="Yasumoto K."/>
            <person name="Yata K."/>
            <person name="Yoshida K."/>
            <person name="Yoshikawa H.-F."/>
            <person name="Zumstein E."/>
            <person name="Yoshikawa H."/>
            <person name="Danchin A."/>
        </authorList>
    </citation>
    <scope>NUCLEOTIDE SEQUENCE [LARGE SCALE GENOMIC DNA]</scope>
    <source>
        <strain>168</strain>
    </source>
</reference>
<reference key="4">
    <citation type="journal article" date="2003" name="J. Bacteriol.">
        <title>A second PDZ-containing serine protease contributes to activation of the sporulation transcription factor sigmaK in Bacillus subtilis.</title>
        <authorList>
            <person name="Pan Q."/>
            <person name="Losick R."/>
            <person name="Rudner D.Z."/>
        </authorList>
    </citation>
    <scope>FUNCTION IN SIGMA-K ACTIVATION</scope>
    <scope>DEVELOPMENTAL STAGE</scope>
    <scope>DISRUPTION PHENOTYPE</scope>
    <source>
        <strain>168 / PY79</strain>
    </source>
</reference>
<reference key="5">
    <citation type="journal article" date="2006" name="Mol. Cell">
        <title>A branched pathway governing the activation of a developmental transcription factor by regulated intramembrane proteolysis.</title>
        <authorList>
            <person name="Campo N."/>
            <person name="Rudner D.Z."/>
        </authorList>
    </citation>
    <scope>FUNCTION AS A SPOIVFA PROTEASE</scope>
    <scope>DISRUPTION PHENOTYPE</scope>
    <source>
        <strain>168 / PY79</strain>
    </source>
</reference>
<reference key="6">
    <citation type="journal article" date="2007" name="J. Bacteriol.">
        <title>SpoIVB and CtpB are both forespore signals in the activation of the sporulation transcription factor sigmaK in Bacillus subtilis.</title>
        <authorList>
            <person name="Campo N."/>
            <person name="Rudner D.Z."/>
        </authorList>
    </citation>
    <scope>FUNCTION</scope>
    <scope>SUBCELLULAR LOCATION</scope>
    <scope>DEVELOPMENTAL STAGE</scope>
    <scope>CLEAVAGE</scope>
    <scope>CLEAVAGE SITES BY SPOIVB</scope>
    <scope>MUTAGENESIS OF 36-ALA--ALA-40</scope>
    <source>
        <strain>168 / PY79</strain>
    </source>
</reference>
<reference key="7">
    <citation type="journal article" date="2013" name="Cell">
        <title>CtpB assembles a gated protease tunnel regulating cell-cell signaling during spore formation in Bacillus subtilis.</title>
        <authorList>
            <person name="Mastny M."/>
            <person name="Heuck A."/>
            <person name="Kurzbauer R."/>
            <person name="Heiduk A."/>
            <person name="Boisguerin P."/>
            <person name="Volkmer R."/>
            <person name="Ehrmann M."/>
            <person name="Rodrigues C.D."/>
            <person name="Rudner D.Z."/>
            <person name="Clausen T."/>
        </authorList>
    </citation>
    <scope>X-RAY CRYSTALLOGRAPHY (1.80 ANGSTROMS) OF 44-480 OF WILD-TYPE AND MUTANTS TYR-118; ARG-168 AND ALA-309 IN ACTIVE AND RESTING STATES AND IN COMPLEX WITH PEPTIDE SUBSTRATE</scope>
    <scope>FUNCTION</scope>
    <scope>CATALYTIC ACTIVITY</scope>
    <scope>ACTIVITY REGULATION</scope>
    <scope>SUBSTRATE SPECIFICITY</scope>
    <scope>SUBUNIT</scope>
    <scope>DOMAIN</scope>
    <scope>PROTEOLYTIC AUTO-CLEAVAGE</scope>
    <scope>ACTIVE SITES</scope>
    <scope>SITES</scope>
    <scope>DISRUPTION PHENOTYPE</scope>
    <scope>MUTAGENESIS OF VAL-118; ARG-168; SER-309 AND GLN-338</scope>
    <scope>PDZ DOMAIN DELETION MUTANT</scope>
</reference>
<name>CTPB_BACSU</name>
<gene>
    <name type="primary">ctpB</name>
    <name type="synonym">yvjB</name>
    <name type="ordered locus">BSU35240</name>
</gene>
<proteinExistence type="evidence at protein level"/>
<feature type="signal peptide" evidence="1">
    <location>
        <begin position="1"/>
        <end position="23"/>
    </location>
</feature>
<feature type="chain" id="PRO_0000390777" description="Carboxy-terminal processing protease CtpB">
    <location>
        <begin position="24"/>
        <end position="480"/>
    </location>
</feature>
<feature type="domain" description="PDZ" evidence="2">
    <location>
        <begin position="92"/>
        <end position="182"/>
    </location>
</feature>
<feature type="region of interest" description="Peptide binding" evidence="6">
    <location>
        <begin position="113"/>
        <end position="116"/>
    </location>
</feature>
<feature type="active site" description="Nucleophile" evidence="6">
    <location>
        <position position="309"/>
    </location>
</feature>
<feature type="active site" description="Charge relay system" evidence="6">
    <location>
        <position position="334"/>
    </location>
</feature>
<feature type="active site" description="Charge relay system" evidence="6">
    <location>
        <position position="338"/>
    </location>
</feature>
<feature type="site" description="Cleavage; by SpoIVB, and cleavage; by autolysis" evidence="6">
    <location>
        <begin position="36"/>
        <end position="37"/>
    </location>
</feature>
<feature type="site" description="Cleavage; by SpoIVB">
    <location>
        <begin position="40"/>
        <end position="41"/>
    </location>
</feature>
<feature type="site" description="Cleavage; by autolysis" evidence="6">
    <location>
        <begin position="42"/>
        <end position="43"/>
    </location>
</feature>
<feature type="site" description="Crucial for substrate binding and protease activation" evidence="6">
    <location>
        <position position="168"/>
    </location>
</feature>
<feature type="mutagenesis site" description="No cleavage by SpoIVB. No effect on pro-sigma-K processing." evidence="5">
    <original>AAVPA</original>
    <variation>RAVPR</variation>
    <location>
        <begin position="36"/>
        <end position="40"/>
    </location>
</feature>
<feature type="mutagenesis site" description="Constitutively active protease with higher activity than wild-type protease and total loss of substrate specificity." evidence="6">
    <location>
        <begin position="92"/>
        <end position="182"/>
    </location>
</feature>
<feature type="mutagenesis site" description="Loss of peptide binding to the PDZ domain, but still has residual protease activity. Less than residual protease activity; when associated with A/F-168." evidence="6">
    <original>V</original>
    <variation>Y</variation>
    <location>
        <position position="118"/>
    </location>
</feature>
<feature type="mutagenesis site" description="3- to 5-fold weaker affinity for PDZ ligands and reduced proteolytic activity against pre-processed SpoIVFA substrate. Less than residual protease activity; when associated with Y-118." evidence="6">
    <original>R</original>
    <variation>A</variation>
    <variation>F</variation>
    <location>
        <position position="168"/>
    </location>
</feature>
<feature type="mutagenesis site" description="Loss of activity." evidence="6">
    <original>S</original>
    <variation>A</variation>
    <location>
        <position position="309"/>
    </location>
</feature>
<feature type="mutagenesis site" description="Loss of activity." evidence="6">
    <original>Q</original>
    <variation>E</variation>
    <location>
        <position position="338"/>
    </location>
</feature>
<feature type="helix" evidence="10">
    <location>
        <begin position="46"/>
        <end position="65"/>
    </location>
</feature>
<feature type="strand" evidence="10">
    <location>
        <begin position="66"/>
        <end position="68"/>
    </location>
</feature>
<feature type="helix" evidence="10">
    <location>
        <begin position="72"/>
        <end position="85"/>
    </location>
</feature>
<feature type="turn" evidence="11">
    <location>
        <begin position="86"/>
        <end position="88"/>
    </location>
</feature>
<feature type="strand" evidence="10">
    <location>
        <begin position="93"/>
        <end position="95"/>
    </location>
</feature>
<feature type="helix" evidence="10">
    <location>
        <begin position="97"/>
        <end position="108"/>
    </location>
</feature>
<feature type="strand" evidence="9">
    <location>
        <begin position="109"/>
        <end position="113"/>
    </location>
</feature>
<feature type="strand" evidence="10">
    <location>
        <begin position="115"/>
        <end position="121"/>
    </location>
</feature>
<feature type="strand" evidence="10">
    <location>
        <begin position="124"/>
        <end position="130"/>
    </location>
</feature>
<feature type="helix" evidence="10">
    <location>
        <begin position="135"/>
        <end position="139"/>
    </location>
</feature>
<feature type="strand" evidence="10">
    <location>
        <begin position="146"/>
        <end position="150"/>
    </location>
</feature>
<feature type="helix" evidence="10">
    <location>
        <begin position="160"/>
        <end position="167"/>
    </location>
</feature>
<feature type="strand" evidence="10">
    <location>
        <begin position="174"/>
        <end position="180"/>
    </location>
</feature>
<feature type="strand" evidence="10">
    <location>
        <begin position="186"/>
        <end position="193"/>
    </location>
</feature>
<feature type="strand" evidence="8">
    <location>
        <begin position="195"/>
        <end position="198"/>
    </location>
</feature>
<feature type="strand" evidence="10">
    <location>
        <begin position="202"/>
        <end position="209"/>
    </location>
</feature>
<feature type="strand" evidence="10">
    <location>
        <begin position="212"/>
        <end position="219"/>
    </location>
</feature>
<feature type="helix" evidence="10">
    <location>
        <begin position="226"/>
        <end position="239"/>
    </location>
</feature>
<feature type="strand" evidence="10">
    <location>
        <begin position="245"/>
        <end position="248"/>
    </location>
</feature>
<feature type="helix" evidence="10">
    <location>
        <begin position="257"/>
        <end position="264"/>
    </location>
</feature>
<feature type="turn" evidence="10">
    <location>
        <begin position="265"/>
        <end position="267"/>
    </location>
</feature>
<feature type="strand" evidence="10">
    <location>
        <begin position="274"/>
        <end position="278"/>
    </location>
</feature>
<feature type="strand" evidence="10">
    <location>
        <begin position="284"/>
        <end position="287"/>
    </location>
</feature>
<feature type="strand" evidence="10">
    <location>
        <begin position="299"/>
        <end position="303"/>
    </location>
</feature>
<feature type="helix" evidence="10">
    <location>
        <begin position="310"/>
        <end position="320"/>
    </location>
</feature>
<feature type="strand" evidence="10">
    <location>
        <begin position="325"/>
        <end position="329"/>
    </location>
</feature>
<feature type="strand" evidence="10">
    <location>
        <begin position="336"/>
        <end position="342"/>
    </location>
</feature>
<feature type="strand" evidence="10">
    <location>
        <begin position="344"/>
        <end position="346"/>
    </location>
</feature>
<feature type="strand" evidence="10">
    <location>
        <begin position="348"/>
        <end position="357"/>
    </location>
</feature>
<feature type="turn" evidence="10">
    <location>
        <begin position="365"/>
        <end position="367"/>
    </location>
</feature>
<feature type="strand" evidence="10">
    <location>
        <begin position="372"/>
        <end position="374"/>
    </location>
</feature>
<feature type="helix" evidence="10">
    <location>
        <begin position="379"/>
        <end position="383"/>
    </location>
</feature>
<feature type="helix" evidence="10">
    <location>
        <begin position="399"/>
        <end position="410"/>
    </location>
</feature>
<feature type="strand" evidence="10">
    <location>
        <begin position="419"/>
        <end position="421"/>
    </location>
</feature>
<feature type="helix" evidence="10">
    <location>
        <begin position="424"/>
        <end position="436"/>
    </location>
</feature>
<feature type="strand" evidence="8">
    <location>
        <begin position="443"/>
        <end position="445"/>
    </location>
</feature>
<feature type="helix" evidence="10">
    <location>
        <begin position="447"/>
        <end position="462"/>
    </location>
</feature>
<feature type="helix" evidence="10">
    <location>
        <begin position="464"/>
        <end position="466"/>
    </location>
</feature>
<feature type="helix" evidence="10">
    <location>
        <begin position="468"/>
        <end position="476"/>
    </location>
</feature>
<protein>
    <recommendedName>
        <fullName>Carboxy-terminal processing protease CtpB</fullName>
        <shortName>C-terminal processing protease</shortName>
        <ecNumber evidence="6">3.4.21.102</ecNumber>
    </recommendedName>
</protein>
<evidence type="ECO:0000255" key="1"/>
<evidence type="ECO:0000255" key="2">
    <source>
        <dbReference type="PROSITE-ProRule" id="PRU00143"/>
    </source>
</evidence>
<evidence type="ECO:0000269" key="3">
    <source>
    </source>
</evidence>
<evidence type="ECO:0000269" key="4">
    <source>
    </source>
</evidence>
<evidence type="ECO:0000269" key="5">
    <source>
    </source>
</evidence>
<evidence type="ECO:0000269" key="6">
    <source>
    </source>
</evidence>
<evidence type="ECO:0000305" key="7"/>
<evidence type="ECO:0007829" key="8">
    <source>
        <dbReference type="PDB" id="4C2C"/>
    </source>
</evidence>
<evidence type="ECO:0007829" key="9">
    <source>
        <dbReference type="PDB" id="4C2D"/>
    </source>
</evidence>
<evidence type="ECO:0007829" key="10">
    <source>
        <dbReference type="PDB" id="4C2E"/>
    </source>
</evidence>
<evidence type="ECO:0007829" key="11">
    <source>
        <dbReference type="PDB" id="4C2G"/>
    </source>
</evidence>
<keyword id="KW-0002">3D-structure</keyword>
<keyword id="KW-0068">Autocatalytic cleavage</keyword>
<keyword id="KW-0378">Hydrolase</keyword>
<keyword id="KW-0645">Protease</keyword>
<keyword id="KW-1185">Reference proteome</keyword>
<keyword id="KW-0720">Serine protease</keyword>
<keyword id="KW-0732">Signal</keyword>
<keyword id="KW-0749">Sporulation</keyword>
<organism>
    <name type="scientific">Bacillus subtilis (strain 168)</name>
    <dbReference type="NCBI Taxonomy" id="224308"/>
    <lineage>
        <taxon>Bacteria</taxon>
        <taxon>Bacillati</taxon>
        <taxon>Bacillota</taxon>
        <taxon>Bacilli</taxon>
        <taxon>Bacillales</taxon>
        <taxon>Bacillaceae</taxon>
        <taxon>Bacillus</taxon>
    </lineage>
</organism>
<accession>O35002</accession>
<accession>Q795D7</accession>
<dbReference type="EC" id="3.4.21.102" evidence="6"/>
<dbReference type="EMBL" id="AF017113">
    <property type="protein sequence ID" value="AAC67263.1"/>
    <property type="molecule type" value="Genomic_DNA"/>
</dbReference>
<dbReference type="EMBL" id="AL009126">
    <property type="protein sequence ID" value="CAB15541.1"/>
    <property type="molecule type" value="Genomic_DNA"/>
</dbReference>
<dbReference type="PIR" id="E70042">
    <property type="entry name" value="E70042"/>
</dbReference>
<dbReference type="RefSeq" id="NP_391404.1">
    <property type="nucleotide sequence ID" value="NC_000964.3"/>
</dbReference>
<dbReference type="RefSeq" id="WP_003228041.1">
    <property type="nucleotide sequence ID" value="NZ_OZ025638.1"/>
</dbReference>
<dbReference type="PDB" id="4C2C">
    <property type="method" value="X-ray"/>
    <property type="resolution" value="1.90 A"/>
    <property type="chains" value="A=44-480"/>
</dbReference>
<dbReference type="PDB" id="4C2D">
    <property type="method" value="X-ray"/>
    <property type="resolution" value="2.70 A"/>
    <property type="chains" value="A/B/C/D=44-480"/>
</dbReference>
<dbReference type="PDB" id="4C2E">
    <property type="method" value="X-ray"/>
    <property type="resolution" value="1.80 A"/>
    <property type="chains" value="A/B=44-480"/>
</dbReference>
<dbReference type="PDB" id="4C2F">
    <property type="method" value="X-ray"/>
    <property type="resolution" value="2.40 A"/>
    <property type="chains" value="A=44-480"/>
</dbReference>
<dbReference type="PDB" id="4C2G">
    <property type="method" value="X-ray"/>
    <property type="resolution" value="1.90 A"/>
    <property type="chains" value="A=44-480, C=29-40"/>
</dbReference>
<dbReference type="PDB" id="4C2H">
    <property type="method" value="X-ray"/>
    <property type="resolution" value="1.95 A"/>
    <property type="chains" value="A/B=44-480"/>
</dbReference>
<dbReference type="PDBsum" id="4C2C"/>
<dbReference type="PDBsum" id="4C2D"/>
<dbReference type="PDBsum" id="4C2E"/>
<dbReference type="PDBsum" id="4C2F"/>
<dbReference type="PDBsum" id="4C2G"/>
<dbReference type="PDBsum" id="4C2H"/>
<dbReference type="SMR" id="O35002"/>
<dbReference type="FunCoup" id="O35002">
    <property type="interactions" value="495"/>
</dbReference>
<dbReference type="IntAct" id="O35002">
    <property type="interactions" value="3"/>
</dbReference>
<dbReference type="STRING" id="224308.BSU35240"/>
<dbReference type="MEROPS" id="S41.007"/>
<dbReference type="TCDB" id="9.B.174.1.1">
    <property type="family name" value="the two tunnel gated c-terminal processing protease (ctp) family"/>
</dbReference>
<dbReference type="PaxDb" id="224308-BSU35240"/>
<dbReference type="EnsemblBacteria" id="CAB15541">
    <property type="protein sequence ID" value="CAB15541"/>
    <property type="gene ID" value="BSU_35240"/>
</dbReference>
<dbReference type="GeneID" id="936678"/>
<dbReference type="KEGG" id="bsu:BSU35240"/>
<dbReference type="PATRIC" id="fig|224308.179.peg.3814"/>
<dbReference type="eggNOG" id="COG0793">
    <property type="taxonomic scope" value="Bacteria"/>
</dbReference>
<dbReference type="eggNOG" id="COG3409">
    <property type="taxonomic scope" value="Bacteria"/>
</dbReference>
<dbReference type="InParanoid" id="O35002"/>
<dbReference type="OrthoDB" id="9812068at2"/>
<dbReference type="PhylomeDB" id="O35002"/>
<dbReference type="BioCyc" id="BSUB:BSU35240-MONOMER"/>
<dbReference type="BRENDA" id="3.4.21.102">
    <property type="organism ID" value="658"/>
</dbReference>
<dbReference type="EvolutionaryTrace" id="O35002"/>
<dbReference type="Proteomes" id="UP000001570">
    <property type="component" value="Chromosome"/>
</dbReference>
<dbReference type="GO" id="GO:0030288">
    <property type="term" value="C:outer membrane-bounded periplasmic space"/>
    <property type="evidence" value="ECO:0000318"/>
    <property type="project" value="GO_Central"/>
</dbReference>
<dbReference type="GO" id="GO:0004175">
    <property type="term" value="F:endopeptidase activity"/>
    <property type="evidence" value="ECO:0000318"/>
    <property type="project" value="GO_Central"/>
</dbReference>
<dbReference type="GO" id="GO:0042802">
    <property type="term" value="F:identical protein binding"/>
    <property type="evidence" value="ECO:0000353"/>
    <property type="project" value="IntAct"/>
</dbReference>
<dbReference type="GO" id="GO:0008233">
    <property type="term" value="F:peptidase activity"/>
    <property type="evidence" value="ECO:0000314"/>
    <property type="project" value="UniProtKB"/>
</dbReference>
<dbReference type="GO" id="GO:0042277">
    <property type="term" value="F:peptide binding"/>
    <property type="evidence" value="ECO:0000314"/>
    <property type="project" value="UniProtKB"/>
</dbReference>
<dbReference type="GO" id="GO:0042803">
    <property type="term" value="F:protein homodimerization activity"/>
    <property type="evidence" value="ECO:0000314"/>
    <property type="project" value="UniProtKB"/>
</dbReference>
<dbReference type="GO" id="GO:0004252">
    <property type="term" value="F:serine-type endopeptidase activity"/>
    <property type="evidence" value="ECO:0007669"/>
    <property type="project" value="UniProtKB-EC"/>
</dbReference>
<dbReference type="GO" id="GO:0006518">
    <property type="term" value="P:peptide metabolic process"/>
    <property type="evidence" value="ECO:0000314"/>
    <property type="project" value="UniProtKB"/>
</dbReference>
<dbReference type="GO" id="GO:0006508">
    <property type="term" value="P:proteolysis"/>
    <property type="evidence" value="ECO:0000314"/>
    <property type="project" value="UniProtKB"/>
</dbReference>
<dbReference type="GO" id="GO:0007165">
    <property type="term" value="P:signal transduction"/>
    <property type="evidence" value="ECO:0000315"/>
    <property type="project" value="UniProtKB"/>
</dbReference>
<dbReference type="GO" id="GO:0030435">
    <property type="term" value="P:sporulation resulting in formation of a cellular spore"/>
    <property type="evidence" value="ECO:0000314"/>
    <property type="project" value="UniProtKB"/>
</dbReference>
<dbReference type="CDD" id="cd06782">
    <property type="entry name" value="cpPDZ_CPP-like"/>
    <property type="match status" value="1"/>
</dbReference>
<dbReference type="CDD" id="cd07560">
    <property type="entry name" value="Peptidase_S41_CPP"/>
    <property type="match status" value="1"/>
</dbReference>
<dbReference type="FunFam" id="2.30.42.10:FF:000063">
    <property type="entry name" value="Peptidase, S41 family"/>
    <property type="match status" value="1"/>
</dbReference>
<dbReference type="FunFam" id="3.30.750.44:FF:000001">
    <property type="entry name" value="S41 family peptidase"/>
    <property type="match status" value="1"/>
</dbReference>
<dbReference type="Gene3D" id="2.30.42.10">
    <property type="match status" value="1"/>
</dbReference>
<dbReference type="Gene3D" id="3.30.750.44">
    <property type="match status" value="1"/>
</dbReference>
<dbReference type="Gene3D" id="3.90.226.10">
    <property type="entry name" value="2-enoyl-CoA Hydratase, Chain A, domain 1"/>
    <property type="match status" value="1"/>
</dbReference>
<dbReference type="Gene3D" id="1.10.101.10">
    <property type="entry name" value="PGBD-like superfamily/PGBD"/>
    <property type="match status" value="1"/>
</dbReference>
<dbReference type="InterPro" id="IPR029045">
    <property type="entry name" value="ClpP/crotonase-like_dom_sf"/>
</dbReference>
<dbReference type="InterPro" id="IPR055210">
    <property type="entry name" value="CtpA/B_N"/>
</dbReference>
<dbReference type="InterPro" id="IPR001478">
    <property type="entry name" value="PDZ"/>
</dbReference>
<dbReference type="InterPro" id="IPR036034">
    <property type="entry name" value="PDZ_sf"/>
</dbReference>
<dbReference type="InterPro" id="IPR004447">
    <property type="entry name" value="Peptidase_S41A"/>
</dbReference>
<dbReference type="InterPro" id="IPR002477">
    <property type="entry name" value="Peptidoglycan-bd-like"/>
</dbReference>
<dbReference type="InterPro" id="IPR036365">
    <property type="entry name" value="PGBD-like_sf"/>
</dbReference>
<dbReference type="InterPro" id="IPR036366">
    <property type="entry name" value="PGBDSf"/>
</dbReference>
<dbReference type="InterPro" id="IPR005151">
    <property type="entry name" value="Tail-specific_protease"/>
</dbReference>
<dbReference type="NCBIfam" id="TIGR00225">
    <property type="entry name" value="prc"/>
    <property type="match status" value="1"/>
</dbReference>
<dbReference type="PANTHER" id="PTHR32060:SF29">
    <property type="entry name" value="CARBOXY-TERMINAL PROCESSING PROTEASE CTPB"/>
    <property type="match status" value="1"/>
</dbReference>
<dbReference type="PANTHER" id="PTHR32060">
    <property type="entry name" value="TAIL-SPECIFIC PROTEASE"/>
    <property type="match status" value="1"/>
</dbReference>
<dbReference type="Pfam" id="PF22694">
    <property type="entry name" value="CtpB_N-like"/>
    <property type="match status" value="1"/>
</dbReference>
<dbReference type="Pfam" id="PF13180">
    <property type="entry name" value="PDZ_2"/>
    <property type="match status" value="1"/>
</dbReference>
<dbReference type="Pfam" id="PF03572">
    <property type="entry name" value="Peptidase_S41"/>
    <property type="match status" value="1"/>
</dbReference>
<dbReference type="Pfam" id="PF01471">
    <property type="entry name" value="PG_binding_1"/>
    <property type="match status" value="1"/>
</dbReference>
<dbReference type="SMART" id="SM00228">
    <property type="entry name" value="PDZ"/>
    <property type="match status" value="1"/>
</dbReference>
<dbReference type="SMART" id="SM00245">
    <property type="entry name" value="TSPc"/>
    <property type="match status" value="1"/>
</dbReference>
<dbReference type="SUPFAM" id="SSF52096">
    <property type="entry name" value="ClpP/crotonase"/>
    <property type="match status" value="1"/>
</dbReference>
<dbReference type="SUPFAM" id="SSF50156">
    <property type="entry name" value="PDZ domain-like"/>
    <property type="match status" value="1"/>
</dbReference>
<dbReference type="SUPFAM" id="SSF47090">
    <property type="entry name" value="PGBD-like"/>
    <property type="match status" value="1"/>
</dbReference>
<dbReference type="PROSITE" id="PS50106">
    <property type="entry name" value="PDZ"/>
    <property type="match status" value="1"/>
</dbReference>
<sequence>MNQKIMAVIAAGSMLFGGAGVYAGINLLEMDKPQTAAVPATAQADSERDKAMDKIEKAYELISNEYVEKVDREKLLEGAIQGMLSTLNDPYSVYMDKQTAKQFSDSLDSSFEGIGAEVGMEDGKIIIVSPFKKSPAEKAGLKPNDEIISINGESMAGKDLNHAVLKIRGKKGSSVSMKIQRPGTKKQLSFRIKRAEIPLETVFASEKKVQGHSVGYIAISTFSEHTAEDFAKALRELEKKEIEGLVIDVRGNPGGYLQSVEEILKHFVTKDQPYIQIAERNGDKKRYFSTLTHKKAYPVNVITDKGSASASEILAGALKEAGHYDVVGDTSFGKGTVQQAVPMGDGSNIKLTLYKWLTPNGNWIHKKGIEPTIAIKQPDYFSAGPLQLKEPLKVDMNNEDVKHAQVLLKGLSFDPGREDGYFSKDMKKAVMAFQDQNKLNKTGVIDTRTAETLNQQIEKKKSDEKNDLQLQTALKSLFVN</sequence>